<sequence>MAISKSEVEYIAKLARLKFTEEEIEAMAQELSKILDYVNKLNELDTENVEPTAHIVPIHNVFREDEVKPSMPREKVLMNAPFTEQGCFKVPKIIE</sequence>
<accession>Q8RC41</accession>
<reference key="1">
    <citation type="journal article" date="2002" name="Genome Res.">
        <title>A complete sequence of the T. tengcongensis genome.</title>
        <authorList>
            <person name="Bao Q."/>
            <person name="Tian Y."/>
            <person name="Li W."/>
            <person name="Xu Z."/>
            <person name="Xuan Z."/>
            <person name="Hu S."/>
            <person name="Dong W."/>
            <person name="Yang J."/>
            <person name="Chen Y."/>
            <person name="Xue Y."/>
            <person name="Xu Y."/>
            <person name="Lai X."/>
            <person name="Huang L."/>
            <person name="Dong X."/>
            <person name="Ma Y."/>
            <person name="Ling L."/>
            <person name="Tan H."/>
            <person name="Chen R."/>
            <person name="Wang J."/>
            <person name="Yu J."/>
            <person name="Yang H."/>
        </authorList>
    </citation>
    <scope>NUCLEOTIDE SEQUENCE [LARGE SCALE GENOMIC DNA]</scope>
    <source>
        <strain>DSM 15242 / JCM 11007 / NBRC 100824 / MB4</strain>
    </source>
</reference>
<feature type="chain" id="PRO_0000105354" description="Aspartyl/glutamyl-tRNA(Asn/Gln) amidotransferase subunit C">
    <location>
        <begin position="1"/>
        <end position="95"/>
    </location>
</feature>
<organism>
    <name type="scientific">Caldanaerobacter subterraneus subsp. tengcongensis (strain DSM 15242 / JCM 11007 / NBRC 100824 / MB4)</name>
    <name type="common">Thermoanaerobacter tengcongensis</name>
    <dbReference type="NCBI Taxonomy" id="273068"/>
    <lineage>
        <taxon>Bacteria</taxon>
        <taxon>Bacillati</taxon>
        <taxon>Bacillota</taxon>
        <taxon>Clostridia</taxon>
        <taxon>Thermoanaerobacterales</taxon>
        <taxon>Thermoanaerobacteraceae</taxon>
        <taxon>Caldanaerobacter</taxon>
    </lineage>
</organism>
<comment type="function">
    <text evidence="1">Allows the formation of correctly charged Asn-tRNA(Asn) or Gln-tRNA(Gln) through the transamidation of misacylated Asp-tRNA(Asn) or Glu-tRNA(Gln) in organisms which lack either or both of asparaginyl-tRNA or glutaminyl-tRNA synthetases. The reaction takes place in the presence of glutamine and ATP through an activated phospho-Asp-tRNA(Asn) or phospho-Glu-tRNA(Gln).</text>
</comment>
<comment type="catalytic activity">
    <reaction evidence="1">
        <text>L-glutamyl-tRNA(Gln) + L-glutamine + ATP + H2O = L-glutaminyl-tRNA(Gln) + L-glutamate + ADP + phosphate + H(+)</text>
        <dbReference type="Rhea" id="RHEA:17521"/>
        <dbReference type="Rhea" id="RHEA-COMP:9681"/>
        <dbReference type="Rhea" id="RHEA-COMP:9684"/>
        <dbReference type="ChEBI" id="CHEBI:15377"/>
        <dbReference type="ChEBI" id="CHEBI:15378"/>
        <dbReference type="ChEBI" id="CHEBI:29985"/>
        <dbReference type="ChEBI" id="CHEBI:30616"/>
        <dbReference type="ChEBI" id="CHEBI:43474"/>
        <dbReference type="ChEBI" id="CHEBI:58359"/>
        <dbReference type="ChEBI" id="CHEBI:78520"/>
        <dbReference type="ChEBI" id="CHEBI:78521"/>
        <dbReference type="ChEBI" id="CHEBI:456216"/>
    </reaction>
</comment>
<comment type="catalytic activity">
    <reaction evidence="1">
        <text>L-aspartyl-tRNA(Asn) + L-glutamine + ATP + H2O = L-asparaginyl-tRNA(Asn) + L-glutamate + ADP + phosphate + 2 H(+)</text>
        <dbReference type="Rhea" id="RHEA:14513"/>
        <dbReference type="Rhea" id="RHEA-COMP:9674"/>
        <dbReference type="Rhea" id="RHEA-COMP:9677"/>
        <dbReference type="ChEBI" id="CHEBI:15377"/>
        <dbReference type="ChEBI" id="CHEBI:15378"/>
        <dbReference type="ChEBI" id="CHEBI:29985"/>
        <dbReference type="ChEBI" id="CHEBI:30616"/>
        <dbReference type="ChEBI" id="CHEBI:43474"/>
        <dbReference type="ChEBI" id="CHEBI:58359"/>
        <dbReference type="ChEBI" id="CHEBI:78515"/>
        <dbReference type="ChEBI" id="CHEBI:78516"/>
        <dbReference type="ChEBI" id="CHEBI:456216"/>
    </reaction>
</comment>
<comment type="subunit">
    <text evidence="1">Heterotrimer of A, B and C subunits.</text>
</comment>
<comment type="similarity">
    <text evidence="1">Belongs to the GatC family.</text>
</comment>
<name>GATC_CALS4</name>
<proteinExistence type="inferred from homology"/>
<protein>
    <recommendedName>
        <fullName evidence="1">Aspartyl/glutamyl-tRNA(Asn/Gln) amidotransferase subunit C</fullName>
        <shortName evidence="1">Asp/Glu-ADT subunit C</shortName>
        <ecNumber evidence="1">6.3.5.-</ecNumber>
    </recommendedName>
</protein>
<gene>
    <name evidence="1" type="primary">gatC</name>
    <name type="ordered locus">TTE0606</name>
</gene>
<evidence type="ECO:0000255" key="1">
    <source>
        <dbReference type="HAMAP-Rule" id="MF_00122"/>
    </source>
</evidence>
<keyword id="KW-0067">ATP-binding</keyword>
<keyword id="KW-0436">Ligase</keyword>
<keyword id="KW-0547">Nucleotide-binding</keyword>
<keyword id="KW-0648">Protein biosynthesis</keyword>
<keyword id="KW-1185">Reference proteome</keyword>
<dbReference type="EC" id="6.3.5.-" evidence="1"/>
<dbReference type="EMBL" id="AE008691">
    <property type="protein sequence ID" value="AAM23876.1"/>
    <property type="molecule type" value="Genomic_DNA"/>
</dbReference>
<dbReference type="RefSeq" id="WP_011025021.1">
    <property type="nucleotide sequence ID" value="NZ_JANUCV010000001.1"/>
</dbReference>
<dbReference type="SMR" id="Q8RC41"/>
<dbReference type="STRING" id="273068.TTE0606"/>
<dbReference type="KEGG" id="tte:TTE0606"/>
<dbReference type="eggNOG" id="COG0721">
    <property type="taxonomic scope" value="Bacteria"/>
</dbReference>
<dbReference type="HOGENOM" id="CLU_105899_1_2_9"/>
<dbReference type="OrthoDB" id="9813938at2"/>
<dbReference type="Proteomes" id="UP000000555">
    <property type="component" value="Chromosome"/>
</dbReference>
<dbReference type="GO" id="GO:0050566">
    <property type="term" value="F:asparaginyl-tRNA synthase (glutamine-hydrolyzing) activity"/>
    <property type="evidence" value="ECO:0007669"/>
    <property type="project" value="RHEA"/>
</dbReference>
<dbReference type="GO" id="GO:0005524">
    <property type="term" value="F:ATP binding"/>
    <property type="evidence" value="ECO:0007669"/>
    <property type="project" value="UniProtKB-KW"/>
</dbReference>
<dbReference type="GO" id="GO:0050567">
    <property type="term" value="F:glutaminyl-tRNA synthase (glutamine-hydrolyzing) activity"/>
    <property type="evidence" value="ECO:0007669"/>
    <property type="project" value="UniProtKB-UniRule"/>
</dbReference>
<dbReference type="GO" id="GO:0070681">
    <property type="term" value="P:glutaminyl-tRNAGln biosynthesis via transamidation"/>
    <property type="evidence" value="ECO:0007669"/>
    <property type="project" value="TreeGrafter"/>
</dbReference>
<dbReference type="GO" id="GO:0006450">
    <property type="term" value="P:regulation of translational fidelity"/>
    <property type="evidence" value="ECO:0007669"/>
    <property type="project" value="InterPro"/>
</dbReference>
<dbReference type="GO" id="GO:0006412">
    <property type="term" value="P:translation"/>
    <property type="evidence" value="ECO:0007669"/>
    <property type="project" value="UniProtKB-UniRule"/>
</dbReference>
<dbReference type="Gene3D" id="1.10.20.60">
    <property type="entry name" value="Glu-tRNAGln amidotransferase C subunit, N-terminal domain"/>
    <property type="match status" value="1"/>
</dbReference>
<dbReference type="HAMAP" id="MF_00122">
    <property type="entry name" value="GatC"/>
    <property type="match status" value="1"/>
</dbReference>
<dbReference type="InterPro" id="IPR036113">
    <property type="entry name" value="Asp/Glu-ADT_sf_sub_c"/>
</dbReference>
<dbReference type="InterPro" id="IPR003837">
    <property type="entry name" value="GatC"/>
</dbReference>
<dbReference type="NCBIfam" id="TIGR00135">
    <property type="entry name" value="gatC"/>
    <property type="match status" value="1"/>
</dbReference>
<dbReference type="PANTHER" id="PTHR15004">
    <property type="entry name" value="GLUTAMYL-TRNA(GLN) AMIDOTRANSFERASE SUBUNIT C, MITOCHONDRIAL"/>
    <property type="match status" value="1"/>
</dbReference>
<dbReference type="PANTHER" id="PTHR15004:SF0">
    <property type="entry name" value="GLUTAMYL-TRNA(GLN) AMIDOTRANSFERASE SUBUNIT C, MITOCHONDRIAL"/>
    <property type="match status" value="1"/>
</dbReference>
<dbReference type="Pfam" id="PF02686">
    <property type="entry name" value="GatC"/>
    <property type="match status" value="1"/>
</dbReference>
<dbReference type="SUPFAM" id="SSF141000">
    <property type="entry name" value="Glu-tRNAGln amidotransferase C subunit"/>
    <property type="match status" value="1"/>
</dbReference>